<dbReference type="EMBL" id="CP000312">
    <property type="protein sequence ID" value="ABG86668.1"/>
    <property type="molecule type" value="Genomic_DNA"/>
</dbReference>
<dbReference type="RefSeq" id="WP_011010899.1">
    <property type="nucleotide sequence ID" value="NC_008262.1"/>
</dbReference>
<dbReference type="SMR" id="Q0SQH8"/>
<dbReference type="KEGG" id="cpr:CPR_2364"/>
<dbReference type="Proteomes" id="UP000001824">
    <property type="component" value="Chromosome"/>
</dbReference>
<dbReference type="GO" id="GO:0022625">
    <property type="term" value="C:cytosolic large ribosomal subunit"/>
    <property type="evidence" value="ECO:0007669"/>
    <property type="project" value="TreeGrafter"/>
</dbReference>
<dbReference type="GO" id="GO:0003729">
    <property type="term" value="F:mRNA binding"/>
    <property type="evidence" value="ECO:0007669"/>
    <property type="project" value="TreeGrafter"/>
</dbReference>
<dbReference type="GO" id="GO:0003735">
    <property type="term" value="F:structural constituent of ribosome"/>
    <property type="evidence" value="ECO:0007669"/>
    <property type="project" value="InterPro"/>
</dbReference>
<dbReference type="GO" id="GO:0017148">
    <property type="term" value="P:negative regulation of translation"/>
    <property type="evidence" value="ECO:0007669"/>
    <property type="project" value="TreeGrafter"/>
</dbReference>
<dbReference type="GO" id="GO:0006412">
    <property type="term" value="P:translation"/>
    <property type="evidence" value="ECO:0007669"/>
    <property type="project" value="UniProtKB-UniRule"/>
</dbReference>
<dbReference type="CDD" id="cd00392">
    <property type="entry name" value="Ribosomal_L13"/>
    <property type="match status" value="1"/>
</dbReference>
<dbReference type="FunFam" id="3.90.1180.10:FF:000001">
    <property type="entry name" value="50S ribosomal protein L13"/>
    <property type="match status" value="1"/>
</dbReference>
<dbReference type="Gene3D" id="3.90.1180.10">
    <property type="entry name" value="Ribosomal protein L13"/>
    <property type="match status" value="1"/>
</dbReference>
<dbReference type="HAMAP" id="MF_01366">
    <property type="entry name" value="Ribosomal_uL13"/>
    <property type="match status" value="1"/>
</dbReference>
<dbReference type="InterPro" id="IPR005822">
    <property type="entry name" value="Ribosomal_uL13"/>
</dbReference>
<dbReference type="InterPro" id="IPR005823">
    <property type="entry name" value="Ribosomal_uL13_bac-type"/>
</dbReference>
<dbReference type="InterPro" id="IPR023563">
    <property type="entry name" value="Ribosomal_uL13_CS"/>
</dbReference>
<dbReference type="InterPro" id="IPR036899">
    <property type="entry name" value="Ribosomal_uL13_sf"/>
</dbReference>
<dbReference type="NCBIfam" id="TIGR01066">
    <property type="entry name" value="rplM_bact"/>
    <property type="match status" value="1"/>
</dbReference>
<dbReference type="PANTHER" id="PTHR11545:SF2">
    <property type="entry name" value="LARGE RIBOSOMAL SUBUNIT PROTEIN UL13M"/>
    <property type="match status" value="1"/>
</dbReference>
<dbReference type="PANTHER" id="PTHR11545">
    <property type="entry name" value="RIBOSOMAL PROTEIN L13"/>
    <property type="match status" value="1"/>
</dbReference>
<dbReference type="Pfam" id="PF00572">
    <property type="entry name" value="Ribosomal_L13"/>
    <property type="match status" value="1"/>
</dbReference>
<dbReference type="PIRSF" id="PIRSF002181">
    <property type="entry name" value="Ribosomal_L13"/>
    <property type="match status" value="1"/>
</dbReference>
<dbReference type="SUPFAM" id="SSF52161">
    <property type="entry name" value="Ribosomal protein L13"/>
    <property type="match status" value="1"/>
</dbReference>
<dbReference type="PROSITE" id="PS00783">
    <property type="entry name" value="RIBOSOMAL_L13"/>
    <property type="match status" value="1"/>
</dbReference>
<sequence>MKSYIAKAQEVERKWYVVDAAGKPLGRVASQVASILRGKNKPTFTPNVDCGDFVIVINAEKVVLTGKKLDQKMLRKHSLYAGGLKETPYREVLEKKPEFAFEEAVRRMLPTGVLGRKMLKKLNVYRGAEHNHAAQKPEVLELRY</sequence>
<accession>Q0SQH8</accession>
<feature type="chain" id="PRO_0000261715" description="Large ribosomal subunit protein uL13">
    <location>
        <begin position="1"/>
        <end position="144"/>
    </location>
</feature>
<gene>
    <name evidence="1" type="primary">rplM</name>
    <name type="ordered locus">CPR_2364</name>
</gene>
<reference key="1">
    <citation type="journal article" date="2006" name="Genome Res.">
        <title>Skewed genomic variability in strains of the toxigenic bacterial pathogen, Clostridium perfringens.</title>
        <authorList>
            <person name="Myers G.S.A."/>
            <person name="Rasko D.A."/>
            <person name="Cheung J.K."/>
            <person name="Ravel J."/>
            <person name="Seshadri R."/>
            <person name="DeBoy R.T."/>
            <person name="Ren Q."/>
            <person name="Varga J."/>
            <person name="Awad M.M."/>
            <person name="Brinkac L.M."/>
            <person name="Daugherty S.C."/>
            <person name="Haft D.H."/>
            <person name="Dodson R.J."/>
            <person name="Madupu R."/>
            <person name="Nelson W.C."/>
            <person name="Rosovitz M.J."/>
            <person name="Sullivan S.A."/>
            <person name="Khouri H."/>
            <person name="Dimitrov G.I."/>
            <person name="Watkins K.L."/>
            <person name="Mulligan S."/>
            <person name="Benton J."/>
            <person name="Radune D."/>
            <person name="Fisher D.J."/>
            <person name="Atkins H.S."/>
            <person name="Hiscox T."/>
            <person name="Jost B.H."/>
            <person name="Billington S.J."/>
            <person name="Songer J.G."/>
            <person name="McClane B.A."/>
            <person name="Titball R.W."/>
            <person name="Rood J.I."/>
            <person name="Melville S.B."/>
            <person name="Paulsen I.T."/>
        </authorList>
    </citation>
    <scope>NUCLEOTIDE SEQUENCE [LARGE SCALE GENOMIC DNA]</scope>
    <source>
        <strain>SM101 / Type A</strain>
    </source>
</reference>
<evidence type="ECO:0000255" key="1">
    <source>
        <dbReference type="HAMAP-Rule" id="MF_01366"/>
    </source>
</evidence>
<evidence type="ECO:0000305" key="2"/>
<keyword id="KW-0687">Ribonucleoprotein</keyword>
<keyword id="KW-0689">Ribosomal protein</keyword>
<name>RL13_CLOPS</name>
<comment type="function">
    <text evidence="1">This protein is one of the early assembly proteins of the 50S ribosomal subunit, although it is not seen to bind rRNA by itself. It is important during the early stages of 50S assembly.</text>
</comment>
<comment type="subunit">
    <text evidence="1">Part of the 50S ribosomal subunit.</text>
</comment>
<comment type="similarity">
    <text evidence="1">Belongs to the universal ribosomal protein uL13 family.</text>
</comment>
<protein>
    <recommendedName>
        <fullName evidence="1">Large ribosomal subunit protein uL13</fullName>
    </recommendedName>
    <alternativeName>
        <fullName evidence="2">50S ribosomal protein L13</fullName>
    </alternativeName>
</protein>
<proteinExistence type="inferred from homology"/>
<organism>
    <name type="scientific">Clostridium perfringens (strain SM101 / Type A)</name>
    <dbReference type="NCBI Taxonomy" id="289380"/>
    <lineage>
        <taxon>Bacteria</taxon>
        <taxon>Bacillati</taxon>
        <taxon>Bacillota</taxon>
        <taxon>Clostridia</taxon>
        <taxon>Eubacteriales</taxon>
        <taxon>Clostridiaceae</taxon>
        <taxon>Clostridium</taxon>
    </lineage>
</organism>